<gene>
    <name evidence="1" type="primary">dut</name>
    <name type="ordered locus">MS1937</name>
</gene>
<proteinExistence type="inferred from homology"/>
<organism>
    <name type="scientific">Mannheimia succiniciproducens (strain KCTC 0769BP / MBEL55E)</name>
    <dbReference type="NCBI Taxonomy" id="221988"/>
    <lineage>
        <taxon>Bacteria</taxon>
        <taxon>Pseudomonadati</taxon>
        <taxon>Pseudomonadota</taxon>
        <taxon>Gammaproteobacteria</taxon>
        <taxon>Pasteurellales</taxon>
        <taxon>Pasteurellaceae</taxon>
        <taxon>Basfia</taxon>
    </lineage>
</organism>
<comment type="function">
    <text evidence="1">This enzyme is involved in nucleotide metabolism: it produces dUMP, the immediate precursor of thymidine nucleotides and it decreases the intracellular concentration of dUTP so that uracil cannot be incorporated into DNA.</text>
</comment>
<comment type="catalytic activity">
    <reaction evidence="1">
        <text>dUTP + H2O = dUMP + diphosphate + H(+)</text>
        <dbReference type="Rhea" id="RHEA:10248"/>
        <dbReference type="ChEBI" id="CHEBI:15377"/>
        <dbReference type="ChEBI" id="CHEBI:15378"/>
        <dbReference type="ChEBI" id="CHEBI:33019"/>
        <dbReference type="ChEBI" id="CHEBI:61555"/>
        <dbReference type="ChEBI" id="CHEBI:246422"/>
        <dbReference type="EC" id="3.6.1.23"/>
    </reaction>
</comment>
<comment type="cofactor">
    <cofactor evidence="1">
        <name>Mg(2+)</name>
        <dbReference type="ChEBI" id="CHEBI:18420"/>
    </cofactor>
</comment>
<comment type="pathway">
    <text evidence="1">Pyrimidine metabolism; dUMP biosynthesis; dUMP from dCTP (dUTP route): step 2/2.</text>
</comment>
<comment type="similarity">
    <text evidence="1">Belongs to the dUTPase family.</text>
</comment>
<sequence>MKKIDVKILDSRIGNEFPLPAYATSGSAGLDLRALIEEGFDLQPGETKLIPTGLSIYIADPNLAAVILPRSGLGHKHGIVLGNLVGLIDSDYQGPLMVSMWNRGEQPFRIEVGDRIAQLVFVPVVQAEFNIVTDFTQTERGEGGFGHSGKQ</sequence>
<name>DUT_MANSM</name>
<dbReference type="EC" id="3.6.1.23" evidence="1"/>
<dbReference type="EMBL" id="AE016827">
    <property type="protein sequence ID" value="AAU38544.1"/>
    <property type="molecule type" value="Genomic_DNA"/>
</dbReference>
<dbReference type="RefSeq" id="WP_011201097.1">
    <property type="nucleotide sequence ID" value="NC_006300.1"/>
</dbReference>
<dbReference type="SMR" id="Q65R66"/>
<dbReference type="STRING" id="221988.MS1937"/>
<dbReference type="KEGG" id="msu:MS1937"/>
<dbReference type="eggNOG" id="COG0756">
    <property type="taxonomic scope" value="Bacteria"/>
</dbReference>
<dbReference type="HOGENOM" id="CLU_068508_1_1_6"/>
<dbReference type="OrthoDB" id="9809956at2"/>
<dbReference type="UniPathway" id="UPA00610">
    <property type="reaction ID" value="UER00666"/>
</dbReference>
<dbReference type="Proteomes" id="UP000000607">
    <property type="component" value="Chromosome"/>
</dbReference>
<dbReference type="GO" id="GO:0004170">
    <property type="term" value="F:dUTP diphosphatase activity"/>
    <property type="evidence" value="ECO:0007669"/>
    <property type="project" value="UniProtKB-UniRule"/>
</dbReference>
<dbReference type="GO" id="GO:0000287">
    <property type="term" value="F:magnesium ion binding"/>
    <property type="evidence" value="ECO:0007669"/>
    <property type="project" value="UniProtKB-UniRule"/>
</dbReference>
<dbReference type="GO" id="GO:0006226">
    <property type="term" value="P:dUMP biosynthetic process"/>
    <property type="evidence" value="ECO:0007669"/>
    <property type="project" value="UniProtKB-UniRule"/>
</dbReference>
<dbReference type="GO" id="GO:0046081">
    <property type="term" value="P:dUTP catabolic process"/>
    <property type="evidence" value="ECO:0007669"/>
    <property type="project" value="InterPro"/>
</dbReference>
<dbReference type="CDD" id="cd07557">
    <property type="entry name" value="trimeric_dUTPase"/>
    <property type="match status" value="1"/>
</dbReference>
<dbReference type="FunFam" id="2.70.40.10:FF:000002">
    <property type="entry name" value="dUTP diphosphatase"/>
    <property type="match status" value="1"/>
</dbReference>
<dbReference type="Gene3D" id="2.70.40.10">
    <property type="match status" value="1"/>
</dbReference>
<dbReference type="HAMAP" id="MF_00116">
    <property type="entry name" value="dUTPase_bact"/>
    <property type="match status" value="1"/>
</dbReference>
<dbReference type="InterPro" id="IPR008181">
    <property type="entry name" value="dUTPase"/>
</dbReference>
<dbReference type="InterPro" id="IPR029054">
    <property type="entry name" value="dUTPase-like"/>
</dbReference>
<dbReference type="InterPro" id="IPR036157">
    <property type="entry name" value="dUTPase-like_sf"/>
</dbReference>
<dbReference type="InterPro" id="IPR033704">
    <property type="entry name" value="dUTPase_trimeric"/>
</dbReference>
<dbReference type="NCBIfam" id="TIGR00576">
    <property type="entry name" value="dut"/>
    <property type="match status" value="1"/>
</dbReference>
<dbReference type="NCBIfam" id="NF001862">
    <property type="entry name" value="PRK00601.1"/>
    <property type="match status" value="1"/>
</dbReference>
<dbReference type="PANTHER" id="PTHR11241">
    <property type="entry name" value="DEOXYURIDINE 5'-TRIPHOSPHATE NUCLEOTIDOHYDROLASE"/>
    <property type="match status" value="1"/>
</dbReference>
<dbReference type="PANTHER" id="PTHR11241:SF0">
    <property type="entry name" value="DEOXYURIDINE 5'-TRIPHOSPHATE NUCLEOTIDOHYDROLASE"/>
    <property type="match status" value="1"/>
</dbReference>
<dbReference type="Pfam" id="PF00692">
    <property type="entry name" value="dUTPase"/>
    <property type="match status" value="1"/>
</dbReference>
<dbReference type="SUPFAM" id="SSF51283">
    <property type="entry name" value="dUTPase-like"/>
    <property type="match status" value="1"/>
</dbReference>
<feature type="chain" id="PRO_0000182879" description="Deoxyuridine 5'-triphosphate nucleotidohydrolase">
    <location>
        <begin position="1"/>
        <end position="151"/>
    </location>
</feature>
<feature type="binding site" evidence="1">
    <location>
        <begin position="70"/>
        <end position="72"/>
    </location>
    <ligand>
        <name>substrate</name>
    </ligand>
</feature>
<feature type="binding site" evidence="1">
    <location>
        <position position="83"/>
    </location>
    <ligand>
        <name>substrate</name>
    </ligand>
</feature>
<feature type="binding site" evidence="1">
    <location>
        <begin position="87"/>
        <end position="89"/>
    </location>
    <ligand>
        <name>substrate</name>
    </ligand>
</feature>
<feature type="binding site" evidence="1">
    <location>
        <position position="97"/>
    </location>
    <ligand>
        <name>substrate</name>
    </ligand>
</feature>
<protein>
    <recommendedName>
        <fullName evidence="1">Deoxyuridine 5'-triphosphate nucleotidohydrolase</fullName>
        <shortName evidence="1">dUTPase</shortName>
        <ecNumber evidence="1">3.6.1.23</ecNumber>
    </recommendedName>
    <alternativeName>
        <fullName evidence="1">dUTP pyrophosphatase</fullName>
    </alternativeName>
</protein>
<accession>Q65R66</accession>
<reference key="1">
    <citation type="journal article" date="2004" name="Nat. Biotechnol.">
        <title>The genome sequence of the capnophilic rumen bacterium Mannheimia succiniciproducens.</title>
        <authorList>
            <person name="Hong S.H."/>
            <person name="Kim J.S."/>
            <person name="Lee S.Y."/>
            <person name="In Y.H."/>
            <person name="Choi S.S."/>
            <person name="Rih J.-K."/>
            <person name="Kim C.H."/>
            <person name="Jeong H."/>
            <person name="Hur C.G."/>
            <person name="Kim J.J."/>
        </authorList>
    </citation>
    <scope>NUCLEOTIDE SEQUENCE [LARGE SCALE GENOMIC DNA]</scope>
    <source>
        <strain>KCTC 0769BP / MBEL55E</strain>
    </source>
</reference>
<keyword id="KW-0378">Hydrolase</keyword>
<keyword id="KW-0460">Magnesium</keyword>
<keyword id="KW-0479">Metal-binding</keyword>
<keyword id="KW-0546">Nucleotide metabolism</keyword>
<evidence type="ECO:0000255" key="1">
    <source>
        <dbReference type="HAMAP-Rule" id="MF_00116"/>
    </source>
</evidence>